<sequence>MTEISDLDRQIEQLRRCELIKESEVKALCAKAREILVEESNVQRVDSPVTVCGDIHGQFYDLKELFRVGGDVPETNYLFMGDFVDRGFYSVETFLLLLALKVRYPDRITLIRGNHESRQITQVYGFYDECLRKYGSVTVWRYCTEIFDYLSLSAIIDGKIFCVHGGLSPSIQTLDQIRTIDRKQEVPHDGPMCDLLWSDPEDTTGWGVSPRGAGYLFGSDVVAQFNAANNIDMICRAHQLVMEGYKWHFNETVLTVWSAPNYCYRCGNVAAILELDEHLQKEFIIFEAAPQETRGIPSKKPVADYFL</sequence>
<name>PP4C_XENTR</name>
<dbReference type="EC" id="3.1.3.16"/>
<dbReference type="EMBL" id="BC061369">
    <property type="protein sequence ID" value="AAH61369.1"/>
    <property type="molecule type" value="mRNA"/>
</dbReference>
<dbReference type="RefSeq" id="NP_988943.1">
    <property type="nucleotide sequence ID" value="NM_203612.1"/>
</dbReference>
<dbReference type="RefSeq" id="XP_017945957.1">
    <property type="nucleotide sequence ID" value="XM_018090468.2"/>
</dbReference>
<dbReference type="RefSeq" id="XP_017945958.1">
    <property type="nucleotide sequence ID" value="XM_018090469.1"/>
</dbReference>
<dbReference type="RefSeq" id="XP_017945959.1">
    <property type="nucleotide sequence ID" value="XM_018090470.2"/>
</dbReference>
<dbReference type="SMR" id="Q6P861"/>
<dbReference type="FunCoup" id="Q6P861">
    <property type="interactions" value="2740"/>
</dbReference>
<dbReference type="STRING" id="8364.ENSXETP00000000966"/>
<dbReference type="PaxDb" id="8364-ENSXETP00000044675"/>
<dbReference type="DNASU" id="394540"/>
<dbReference type="GeneID" id="394540"/>
<dbReference type="KEGG" id="xtr:394540"/>
<dbReference type="AGR" id="Xenbase:XB-GENE-970535"/>
<dbReference type="CTD" id="5531"/>
<dbReference type="Xenbase" id="XB-GENE-970535">
    <property type="gene designation" value="ppp4c"/>
</dbReference>
<dbReference type="eggNOG" id="KOG0372">
    <property type="taxonomic scope" value="Eukaryota"/>
</dbReference>
<dbReference type="HOGENOM" id="CLU_004962_8_1_1"/>
<dbReference type="InParanoid" id="Q6P861"/>
<dbReference type="OMA" id="QSTMPID"/>
<dbReference type="OrthoDB" id="1930084at2759"/>
<dbReference type="PhylomeDB" id="Q6P861"/>
<dbReference type="TreeFam" id="TF105559"/>
<dbReference type="Reactome" id="R-XTR-5693607">
    <property type="pathway name" value="Processing of DNA double-strand break ends"/>
</dbReference>
<dbReference type="Proteomes" id="UP000008143">
    <property type="component" value="Chromosome 9"/>
</dbReference>
<dbReference type="ExpressionAtlas" id="Q6P861">
    <property type="expression patterns" value="baseline and differential"/>
</dbReference>
<dbReference type="GO" id="GO:0005813">
    <property type="term" value="C:centrosome"/>
    <property type="evidence" value="ECO:0007669"/>
    <property type="project" value="UniProtKB-SubCell"/>
</dbReference>
<dbReference type="GO" id="GO:0005737">
    <property type="term" value="C:cytoplasm"/>
    <property type="evidence" value="ECO:0007669"/>
    <property type="project" value="UniProtKB-SubCell"/>
</dbReference>
<dbReference type="GO" id="GO:0005634">
    <property type="term" value="C:nucleus"/>
    <property type="evidence" value="ECO:0007669"/>
    <property type="project" value="UniProtKB-SubCell"/>
</dbReference>
<dbReference type="GO" id="GO:0046872">
    <property type="term" value="F:metal ion binding"/>
    <property type="evidence" value="ECO:0007669"/>
    <property type="project" value="UniProtKB-KW"/>
</dbReference>
<dbReference type="GO" id="GO:0004722">
    <property type="term" value="F:protein serine/threonine phosphatase activity"/>
    <property type="evidence" value="ECO:0007669"/>
    <property type="project" value="UniProtKB-EC"/>
</dbReference>
<dbReference type="CDD" id="cd07415">
    <property type="entry name" value="MPP_PP2A_PP4_PP6"/>
    <property type="match status" value="1"/>
</dbReference>
<dbReference type="FunFam" id="3.60.21.10:FF:000010">
    <property type="entry name" value="Serine/threonine-protein phosphatase"/>
    <property type="match status" value="1"/>
</dbReference>
<dbReference type="Gene3D" id="3.60.21.10">
    <property type="match status" value="1"/>
</dbReference>
<dbReference type="InterPro" id="IPR004843">
    <property type="entry name" value="Calcineurin-like_PHP_ApaH"/>
</dbReference>
<dbReference type="InterPro" id="IPR029052">
    <property type="entry name" value="Metallo-depent_PP-like"/>
</dbReference>
<dbReference type="InterPro" id="IPR047129">
    <property type="entry name" value="PPA2-like"/>
</dbReference>
<dbReference type="InterPro" id="IPR006186">
    <property type="entry name" value="Ser/Thr-sp_prot-phosphatase"/>
</dbReference>
<dbReference type="PANTHER" id="PTHR45619">
    <property type="entry name" value="SERINE/THREONINE-PROTEIN PHOSPHATASE PP2A-RELATED"/>
    <property type="match status" value="1"/>
</dbReference>
<dbReference type="Pfam" id="PF00149">
    <property type="entry name" value="Metallophos"/>
    <property type="match status" value="1"/>
</dbReference>
<dbReference type="PRINTS" id="PR00114">
    <property type="entry name" value="STPHPHTASE"/>
</dbReference>
<dbReference type="SMART" id="SM00156">
    <property type="entry name" value="PP2Ac"/>
    <property type="match status" value="1"/>
</dbReference>
<dbReference type="SUPFAM" id="SSF56300">
    <property type="entry name" value="Metallo-dependent phosphatases"/>
    <property type="match status" value="1"/>
</dbReference>
<dbReference type="PROSITE" id="PS00125">
    <property type="entry name" value="SER_THR_PHOSPHATASE"/>
    <property type="match status" value="1"/>
</dbReference>
<gene>
    <name type="primary">ppp4c</name>
</gene>
<keyword id="KW-0963">Cytoplasm</keyword>
<keyword id="KW-0206">Cytoskeleton</keyword>
<keyword id="KW-0378">Hydrolase</keyword>
<keyword id="KW-0464">Manganese</keyword>
<keyword id="KW-0479">Metal-binding</keyword>
<keyword id="KW-0488">Methylation</keyword>
<keyword id="KW-0539">Nucleus</keyword>
<keyword id="KW-0904">Protein phosphatase</keyword>
<keyword id="KW-1185">Reference proteome</keyword>
<proteinExistence type="evidence at transcript level"/>
<organism>
    <name type="scientific">Xenopus tropicalis</name>
    <name type="common">Western clawed frog</name>
    <name type="synonym">Silurana tropicalis</name>
    <dbReference type="NCBI Taxonomy" id="8364"/>
    <lineage>
        <taxon>Eukaryota</taxon>
        <taxon>Metazoa</taxon>
        <taxon>Chordata</taxon>
        <taxon>Craniata</taxon>
        <taxon>Vertebrata</taxon>
        <taxon>Euteleostomi</taxon>
        <taxon>Amphibia</taxon>
        <taxon>Batrachia</taxon>
        <taxon>Anura</taxon>
        <taxon>Pipoidea</taxon>
        <taxon>Pipidae</taxon>
        <taxon>Xenopodinae</taxon>
        <taxon>Xenopus</taxon>
        <taxon>Silurana</taxon>
    </lineage>
</organism>
<comment type="function">
    <text evidence="1">Protein phosphatase that regulates many processes such as microtubule organization at centrosomes.</text>
</comment>
<comment type="catalytic activity">
    <reaction>
        <text>O-phospho-L-seryl-[protein] + H2O = L-seryl-[protein] + phosphate</text>
        <dbReference type="Rhea" id="RHEA:20629"/>
        <dbReference type="Rhea" id="RHEA-COMP:9863"/>
        <dbReference type="Rhea" id="RHEA-COMP:11604"/>
        <dbReference type="ChEBI" id="CHEBI:15377"/>
        <dbReference type="ChEBI" id="CHEBI:29999"/>
        <dbReference type="ChEBI" id="CHEBI:43474"/>
        <dbReference type="ChEBI" id="CHEBI:83421"/>
        <dbReference type="EC" id="3.1.3.16"/>
    </reaction>
</comment>
<comment type="catalytic activity">
    <reaction>
        <text>O-phospho-L-threonyl-[protein] + H2O = L-threonyl-[protein] + phosphate</text>
        <dbReference type="Rhea" id="RHEA:47004"/>
        <dbReference type="Rhea" id="RHEA-COMP:11060"/>
        <dbReference type="Rhea" id="RHEA-COMP:11605"/>
        <dbReference type="ChEBI" id="CHEBI:15377"/>
        <dbReference type="ChEBI" id="CHEBI:30013"/>
        <dbReference type="ChEBI" id="CHEBI:43474"/>
        <dbReference type="ChEBI" id="CHEBI:61977"/>
        <dbReference type="EC" id="3.1.3.16"/>
    </reaction>
</comment>
<comment type="cofactor">
    <cofactor evidence="1">
        <name>Mn(2+)</name>
        <dbReference type="ChEBI" id="CHEBI:29035"/>
    </cofactor>
    <text evidence="1">Binds 2 manganese ions per subunit.</text>
</comment>
<comment type="subunit">
    <text evidence="1">Serine/threonine-protein phosphatase 4 (PP4) occurs in different assemblies of the catalytic and one or more regulatory subunits.</text>
</comment>
<comment type="subcellular location">
    <subcellularLocation>
        <location evidence="1">Cytoplasm</location>
    </subcellularLocation>
    <subcellularLocation>
        <location evidence="1">Nucleus</location>
    </subcellularLocation>
    <subcellularLocation>
        <location evidence="1">Cytoplasm</location>
        <location evidence="1">Cytoskeleton</location>
        <location evidence="1">Microtubule organizing center</location>
        <location evidence="1">Centrosome</location>
    </subcellularLocation>
</comment>
<comment type="similarity">
    <text evidence="2">Belongs to the PPP phosphatase family. PP-4 (PP-X) subfamily.</text>
</comment>
<feature type="chain" id="PRO_0000291881" description="Serine/threonine-protein phosphatase 4 catalytic subunit">
    <location>
        <begin position="1"/>
        <end position="307"/>
    </location>
</feature>
<feature type="active site" description="Proton donor" evidence="1">
    <location>
        <position position="115"/>
    </location>
</feature>
<feature type="binding site" evidence="1">
    <location>
        <position position="54"/>
    </location>
    <ligand>
        <name>Mn(2+)</name>
        <dbReference type="ChEBI" id="CHEBI:29035"/>
        <label>1</label>
    </ligand>
</feature>
<feature type="binding site" evidence="1">
    <location>
        <position position="56"/>
    </location>
    <ligand>
        <name>Mn(2+)</name>
        <dbReference type="ChEBI" id="CHEBI:29035"/>
        <label>1</label>
    </ligand>
</feature>
<feature type="binding site" evidence="1">
    <location>
        <position position="82"/>
    </location>
    <ligand>
        <name>Mn(2+)</name>
        <dbReference type="ChEBI" id="CHEBI:29035"/>
        <label>1</label>
    </ligand>
</feature>
<feature type="binding site" evidence="1">
    <location>
        <position position="82"/>
    </location>
    <ligand>
        <name>Mn(2+)</name>
        <dbReference type="ChEBI" id="CHEBI:29035"/>
        <label>2</label>
    </ligand>
</feature>
<feature type="binding site" evidence="1">
    <location>
        <position position="114"/>
    </location>
    <ligand>
        <name>Mn(2+)</name>
        <dbReference type="ChEBI" id="CHEBI:29035"/>
        <label>2</label>
    </ligand>
</feature>
<feature type="binding site" evidence="1">
    <location>
        <position position="164"/>
    </location>
    <ligand>
        <name>Mn(2+)</name>
        <dbReference type="ChEBI" id="CHEBI:29035"/>
        <label>2</label>
    </ligand>
</feature>
<feature type="binding site" evidence="1">
    <location>
        <position position="238"/>
    </location>
    <ligand>
        <name>Mn(2+)</name>
        <dbReference type="ChEBI" id="CHEBI:29035"/>
        <label>2</label>
    </ligand>
</feature>
<feature type="modified residue" description="Leucine methyl ester" evidence="1">
    <location>
        <position position="307"/>
    </location>
</feature>
<accession>Q6P861</accession>
<protein>
    <recommendedName>
        <fullName>Serine/threonine-protein phosphatase 4 catalytic subunit</fullName>
        <shortName>PP4C</shortName>
        <shortName>Pp4</shortName>
        <ecNumber>3.1.3.16</ecNumber>
    </recommendedName>
</protein>
<reference key="1">
    <citation type="submission" date="2003-11" db="EMBL/GenBank/DDBJ databases">
        <authorList>
            <consortium name="NIH - Xenopus Gene Collection (XGC) project"/>
        </authorList>
    </citation>
    <scope>NUCLEOTIDE SEQUENCE [LARGE SCALE MRNA]</scope>
    <source>
        <tissue>Embryo</tissue>
    </source>
</reference>
<evidence type="ECO:0000250" key="1"/>
<evidence type="ECO:0000305" key="2"/>